<accession>Q1QVH3</accession>
<comment type="function">
    <text evidence="1">Catalyzes the hydrolysis of UDP-3-O-myristoyl-N-acetylglucosamine to form UDP-3-O-myristoylglucosamine and acetate, the committed step in lipid A biosynthesis.</text>
</comment>
<comment type="catalytic activity">
    <reaction evidence="1">
        <text>a UDP-3-O-[(3R)-3-hydroxyacyl]-N-acetyl-alpha-D-glucosamine + H2O = a UDP-3-O-[(3R)-3-hydroxyacyl]-alpha-D-glucosamine + acetate</text>
        <dbReference type="Rhea" id="RHEA:67816"/>
        <dbReference type="ChEBI" id="CHEBI:15377"/>
        <dbReference type="ChEBI" id="CHEBI:30089"/>
        <dbReference type="ChEBI" id="CHEBI:137740"/>
        <dbReference type="ChEBI" id="CHEBI:173225"/>
        <dbReference type="EC" id="3.5.1.108"/>
    </reaction>
</comment>
<comment type="cofactor">
    <cofactor evidence="1">
        <name>Zn(2+)</name>
        <dbReference type="ChEBI" id="CHEBI:29105"/>
    </cofactor>
</comment>
<comment type="pathway">
    <text evidence="1">Glycolipid biosynthesis; lipid IV(A) biosynthesis; lipid IV(A) from (3R)-3-hydroxytetradecanoyl-[acyl-carrier-protein] and UDP-N-acetyl-alpha-D-glucosamine: step 2/6.</text>
</comment>
<comment type="similarity">
    <text evidence="1">Belongs to the LpxC family.</text>
</comment>
<proteinExistence type="inferred from homology"/>
<name>LPXC_CHRSD</name>
<dbReference type="EC" id="3.5.1.108" evidence="1"/>
<dbReference type="EMBL" id="CP000285">
    <property type="protein sequence ID" value="ABE59535.1"/>
    <property type="molecule type" value="Genomic_DNA"/>
</dbReference>
<dbReference type="RefSeq" id="WP_011507481.1">
    <property type="nucleotide sequence ID" value="NC_007963.1"/>
</dbReference>
<dbReference type="SMR" id="Q1QVH3"/>
<dbReference type="STRING" id="290398.Csal_2184"/>
<dbReference type="GeneID" id="95334902"/>
<dbReference type="KEGG" id="csa:Csal_2184"/>
<dbReference type="eggNOG" id="COG0774">
    <property type="taxonomic scope" value="Bacteria"/>
</dbReference>
<dbReference type="HOGENOM" id="CLU_046528_1_0_6"/>
<dbReference type="OrthoDB" id="9802746at2"/>
<dbReference type="UniPathway" id="UPA00359">
    <property type="reaction ID" value="UER00478"/>
</dbReference>
<dbReference type="Proteomes" id="UP000000239">
    <property type="component" value="Chromosome"/>
</dbReference>
<dbReference type="GO" id="GO:0016020">
    <property type="term" value="C:membrane"/>
    <property type="evidence" value="ECO:0007669"/>
    <property type="project" value="GOC"/>
</dbReference>
<dbReference type="GO" id="GO:0046872">
    <property type="term" value="F:metal ion binding"/>
    <property type="evidence" value="ECO:0007669"/>
    <property type="project" value="UniProtKB-KW"/>
</dbReference>
<dbReference type="GO" id="GO:0103117">
    <property type="term" value="F:UDP-3-O-acyl-N-acetylglucosamine deacetylase activity"/>
    <property type="evidence" value="ECO:0007669"/>
    <property type="project" value="UniProtKB-UniRule"/>
</dbReference>
<dbReference type="GO" id="GO:0009245">
    <property type="term" value="P:lipid A biosynthetic process"/>
    <property type="evidence" value="ECO:0007669"/>
    <property type="project" value="UniProtKB-UniRule"/>
</dbReference>
<dbReference type="Gene3D" id="3.30.230.20">
    <property type="entry name" value="lpxc deacetylase, domain 1"/>
    <property type="match status" value="1"/>
</dbReference>
<dbReference type="Gene3D" id="3.30.1700.10">
    <property type="entry name" value="lpxc deacetylase, domain 2"/>
    <property type="match status" value="1"/>
</dbReference>
<dbReference type="HAMAP" id="MF_00388">
    <property type="entry name" value="LpxC"/>
    <property type="match status" value="1"/>
</dbReference>
<dbReference type="InterPro" id="IPR020568">
    <property type="entry name" value="Ribosomal_Su5_D2-typ_SF"/>
</dbReference>
<dbReference type="InterPro" id="IPR004463">
    <property type="entry name" value="UDP-acyl_GlcNac_deAcase"/>
</dbReference>
<dbReference type="InterPro" id="IPR011334">
    <property type="entry name" value="UDP-acyl_GlcNac_deAcase_C"/>
</dbReference>
<dbReference type="InterPro" id="IPR015870">
    <property type="entry name" value="UDP-acyl_N-AcGlcN_deAcase_N"/>
</dbReference>
<dbReference type="NCBIfam" id="TIGR00325">
    <property type="entry name" value="lpxC"/>
    <property type="match status" value="1"/>
</dbReference>
<dbReference type="PANTHER" id="PTHR33694">
    <property type="entry name" value="UDP-3-O-ACYL-N-ACETYLGLUCOSAMINE DEACETYLASE 1, MITOCHONDRIAL-RELATED"/>
    <property type="match status" value="1"/>
</dbReference>
<dbReference type="PANTHER" id="PTHR33694:SF1">
    <property type="entry name" value="UDP-3-O-ACYL-N-ACETYLGLUCOSAMINE DEACETYLASE 1, MITOCHONDRIAL-RELATED"/>
    <property type="match status" value="1"/>
</dbReference>
<dbReference type="Pfam" id="PF03331">
    <property type="entry name" value="LpxC"/>
    <property type="match status" value="1"/>
</dbReference>
<dbReference type="SUPFAM" id="SSF54211">
    <property type="entry name" value="Ribosomal protein S5 domain 2-like"/>
    <property type="match status" value="2"/>
</dbReference>
<organism>
    <name type="scientific">Chromohalobacter salexigens (strain ATCC BAA-138 / DSM 3043 / CIP 106854 / NCIMB 13768 / 1H11)</name>
    <dbReference type="NCBI Taxonomy" id="290398"/>
    <lineage>
        <taxon>Bacteria</taxon>
        <taxon>Pseudomonadati</taxon>
        <taxon>Pseudomonadota</taxon>
        <taxon>Gammaproteobacteria</taxon>
        <taxon>Oceanospirillales</taxon>
        <taxon>Halomonadaceae</taxon>
        <taxon>Chromohalobacter</taxon>
    </lineage>
</organism>
<gene>
    <name evidence="1" type="primary">lpxC</name>
    <name type="ordered locus">Csal_2184</name>
</gene>
<evidence type="ECO:0000255" key="1">
    <source>
        <dbReference type="HAMAP-Rule" id="MF_00388"/>
    </source>
</evidence>
<feature type="chain" id="PRO_0000253660" description="UDP-3-O-acyl-N-acetylglucosamine deacetylase">
    <location>
        <begin position="1"/>
        <end position="303"/>
    </location>
</feature>
<feature type="active site" description="Proton donor" evidence="1">
    <location>
        <position position="264"/>
    </location>
</feature>
<feature type="binding site" evidence="1">
    <location>
        <position position="78"/>
    </location>
    <ligand>
        <name>Zn(2+)</name>
        <dbReference type="ChEBI" id="CHEBI:29105"/>
    </ligand>
</feature>
<feature type="binding site" evidence="1">
    <location>
        <position position="237"/>
    </location>
    <ligand>
        <name>Zn(2+)</name>
        <dbReference type="ChEBI" id="CHEBI:29105"/>
    </ligand>
</feature>
<feature type="binding site" evidence="1">
    <location>
        <position position="241"/>
    </location>
    <ligand>
        <name>Zn(2+)</name>
        <dbReference type="ChEBI" id="CHEBI:29105"/>
    </ligand>
</feature>
<keyword id="KW-0378">Hydrolase</keyword>
<keyword id="KW-0441">Lipid A biosynthesis</keyword>
<keyword id="KW-0444">Lipid biosynthesis</keyword>
<keyword id="KW-0443">Lipid metabolism</keyword>
<keyword id="KW-0479">Metal-binding</keyword>
<keyword id="KW-1185">Reference proteome</keyword>
<keyword id="KW-0862">Zinc</keyword>
<reference key="1">
    <citation type="journal article" date="2011" name="Stand. Genomic Sci.">
        <title>Complete genome sequence of the halophilic and highly halotolerant Chromohalobacter salexigens type strain (1H11(T)).</title>
        <authorList>
            <person name="Copeland A."/>
            <person name="O'Connor K."/>
            <person name="Lucas S."/>
            <person name="Lapidus A."/>
            <person name="Berry K.W."/>
            <person name="Detter J.C."/>
            <person name="Del Rio T.G."/>
            <person name="Hammon N."/>
            <person name="Dalin E."/>
            <person name="Tice H."/>
            <person name="Pitluck S."/>
            <person name="Bruce D."/>
            <person name="Goodwin L."/>
            <person name="Han C."/>
            <person name="Tapia R."/>
            <person name="Saunders E."/>
            <person name="Schmutz J."/>
            <person name="Brettin T."/>
            <person name="Larimer F."/>
            <person name="Land M."/>
            <person name="Hauser L."/>
            <person name="Vargas C."/>
            <person name="Nieto J.J."/>
            <person name="Kyrpides N.C."/>
            <person name="Ivanova N."/>
            <person name="Goker M."/>
            <person name="Klenk H.P."/>
            <person name="Csonka L.N."/>
            <person name="Woyke T."/>
        </authorList>
    </citation>
    <scope>NUCLEOTIDE SEQUENCE [LARGE SCALE GENOMIC DNA]</scope>
    <source>
        <strain>ATCC BAA-138 / DSM 3043 / CIP 106854 / NCIMB 13768 / 1H11</strain>
    </source>
</reference>
<sequence>MIRQRTLKNTIRATGVGLHSGEKVYLTLRPAPVNTGIVFVRTDLDPVVQIAANAEYVTDTTLCTALSRDGVKVATVEHLMSAFAGLGIDNVFVELSAAEVPIMDGSAGPFVFLIQSAGIAEQGAPKKFIRIKREIVVEEDGKEARFLPHNGFKVAFAIDFDHPVFAHQKQTASVDFSTTSFVKEVSRARTFGFMRDLEHLRAQNLALGGSLDNAIVVDDYRIVNEGGLRYEDEFVKHKVLDAIGDLYQLGHSLIGEFRGVKSGHGLNNKLCRALMAQQDAWEIVTFEDDTQTAPISYAAPALA</sequence>
<protein>
    <recommendedName>
        <fullName evidence="1">UDP-3-O-acyl-N-acetylglucosamine deacetylase</fullName>
        <shortName evidence="1">UDP-3-O-acyl-GlcNAc deacetylase</shortName>
        <ecNumber evidence="1">3.5.1.108</ecNumber>
    </recommendedName>
    <alternativeName>
        <fullName evidence="1">UDP-3-O-[R-3-hydroxymyristoyl]-N-acetylglucosamine deacetylase</fullName>
    </alternativeName>
</protein>